<dbReference type="EC" id="2.5.1.3" evidence="1"/>
<dbReference type="EMBL" id="CP001175">
    <property type="protein sequence ID" value="ACK40652.1"/>
    <property type="molecule type" value="Genomic_DNA"/>
</dbReference>
<dbReference type="RefSeq" id="WP_012582020.1">
    <property type="nucleotide sequence ID" value="NC_011660.1"/>
</dbReference>
<dbReference type="SMR" id="B8DET0"/>
<dbReference type="KEGG" id="lmh:LMHCC_2315"/>
<dbReference type="HOGENOM" id="CLU_018272_3_2_9"/>
<dbReference type="UniPathway" id="UPA00060">
    <property type="reaction ID" value="UER00141"/>
</dbReference>
<dbReference type="GO" id="GO:0005737">
    <property type="term" value="C:cytoplasm"/>
    <property type="evidence" value="ECO:0007669"/>
    <property type="project" value="TreeGrafter"/>
</dbReference>
<dbReference type="GO" id="GO:0000287">
    <property type="term" value="F:magnesium ion binding"/>
    <property type="evidence" value="ECO:0007669"/>
    <property type="project" value="UniProtKB-UniRule"/>
</dbReference>
<dbReference type="GO" id="GO:0004789">
    <property type="term" value="F:thiamine-phosphate diphosphorylase activity"/>
    <property type="evidence" value="ECO:0007669"/>
    <property type="project" value="UniProtKB-UniRule"/>
</dbReference>
<dbReference type="GO" id="GO:0009228">
    <property type="term" value="P:thiamine biosynthetic process"/>
    <property type="evidence" value="ECO:0007669"/>
    <property type="project" value="UniProtKB-KW"/>
</dbReference>
<dbReference type="GO" id="GO:0009229">
    <property type="term" value="P:thiamine diphosphate biosynthetic process"/>
    <property type="evidence" value="ECO:0007669"/>
    <property type="project" value="UniProtKB-UniRule"/>
</dbReference>
<dbReference type="CDD" id="cd00564">
    <property type="entry name" value="TMP_TenI"/>
    <property type="match status" value="1"/>
</dbReference>
<dbReference type="FunFam" id="3.20.20.70:FF:000096">
    <property type="entry name" value="Thiamine-phosphate synthase"/>
    <property type="match status" value="1"/>
</dbReference>
<dbReference type="Gene3D" id="3.20.20.70">
    <property type="entry name" value="Aldolase class I"/>
    <property type="match status" value="1"/>
</dbReference>
<dbReference type="HAMAP" id="MF_00097">
    <property type="entry name" value="TMP_synthase"/>
    <property type="match status" value="1"/>
</dbReference>
<dbReference type="InterPro" id="IPR013785">
    <property type="entry name" value="Aldolase_TIM"/>
</dbReference>
<dbReference type="InterPro" id="IPR036206">
    <property type="entry name" value="ThiamineP_synth_sf"/>
</dbReference>
<dbReference type="InterPro" id="IPR022998">
    <property type="entry name" value="ThiamineP_synth_TenI"/>
</dbReference>
<dbReference type="InterPro" id="IPR034291">
    <property type="entry name" value="TMP_synthase"/>
</dbReference>
<dbReference type="NCBIfam" id="TIGR00693">
    <property type="entry name" value="thiE"/>
    <property type="match status" value="1"/>
</dbReference>
<dbReference type="PANTHER" id="PTHR20857">
    <property type="entry name" value="THIAMINE-PHOSPHATE PYROPHOSPHORYLASE"/>
    <property type="match status" value="1"/>
</dbReference>
<dbReference type="PANTHER" id="PTHR20857:SF15">
    <property type="entry name" value="THIAMINE-PHOSPHATE SYNTHASE"/>
    <property type="match status" value="1"/>
</dbReference>
<dbReference type="Pfam" id="PF02581">
    <property type="entry name" value="TMP-TENI"/>
    <property type="match status" value="1"/>
</dbReference>
<dbReference type="SUPFAM" id="SSF51391">
    <property type="entry name" value="Thiamin phosphate synthase"/>
    <property type="match status" value="1"/>
</dbReference>
<proteinExistence type="inferred from homology"/>
<gene>
    <name evidence="1" type="primary">thiE</name>
    <name type="ordered locus">LMHCC_2315</name>
</gene>
<name>THIE_LISMH</name>
<organism>
    <name type="scientific">Listeria monocytogenes serotype 4a (strain HCC23)</name>
    <dbReference type="NCBI Taxonomy" id="552536"/>
    <lineage>
        <taxon>Bacteria</taxon>
        <taxon>Bacillati</taxon>
        <taxon>Bacillota</taxon>
        <taxon>Bacilli</taxon>
        <taxon>Bacillales</taxon>
        <taxon>Listeriaceae</taxon>
        <taxon>Listeria</taxon>
    </lineage>
</organism>
<accession>B8DET0</accession>
<reference key="1">
    <citation type="journal article" date="2011" name="J. Bacteriol.">
        <title>Genome sequence of lineage III Listeria monocytogenes strain HCC23.</title>
        <authorList>
            <person name="Steele C.L."/>
            <person name="Donaldson J.R."/>
            <person name="Paul D."/>
            <person name="Banes M.M."/>
            <person name="Arick T."/>
            <person name="Bridges S.M."/>
            <person name="Lawrence M.L."/>
        </authorList>
    </citation>
    <scope>NUCLEOTIDE SEQUENCE [LARGE SCALE GENOMIC DNA]</scope>
    <source>
        <strain>HCC23</strain>
    </source>
</reference>
<protein>
    <recommendedName>
        <fullName evidence="1">Thiamine-phosphate synthase</fullName>
        <shortName evidence="1">TP synthase</shortName>
        <shortName evidence="1">TPS</shortName>
        <ecNumber evidence="1">2.5.1.3</ecNumber>
    </recommendedName>
    <alternativeName>
        <fullName evidence="1">Thiamine-phosphate pyrophosphorylase</fullName>
        <shortName evidence="1">TMP pyrophosphorylase</shortName>
        <shortName evidence="1">TMP-PPase</shortName>
    </alternativeName>
</protein>
<comment type="function">
    <text evidence="1">Condenses 4-methyl-5-(beta-hydroxyethyl)thiazole monophosphate (THZ-P) and 2-methyl-4-amino-5-hydroxymethyl pyrimidine pyrophosphate (HMP-PP) to form thiamine monophosphate (TMP).</text>
</comment>
<comment type="catalytic activity">
    <reaction evidence="1">
        <text>2-[(2R,5Z)-2-carboxy-4-methylthiazol-5(2H)-ylidene]ethyl phosphate + 4-amino-2-methyl-5-(diphosphooxymethyl)pyrimidine + 2 H(+) = thiamine phosphate + CO2 + diphosphate</text>
        <dbReference type="Rhea" id="RHEA:47844"/>
        <dbReference type="ChEBI" id="CHEBI:15378"/>
        <dbReference type="ChEBI" id="CHEBI:16526"/>
        <dbReference type="ChEBI" id="CHEBI:33019"/>
        <dbReference type="ChEBI" id="CHEBI:37575"/>
        <dbReference type="ChEBI" id="CHEBI:57841"/>
        <dbReference type="ChEBI" id="CHEBI:62899"/>
        <dbReference type="EC" id="2.5.1.3"/>
    </reaction>
</comment>
<comment type="catalytic activity">
    <reaction evidence="1">
        <text>2-(2-carboxy-4-methylthiazol-5-yl)ethyl phosphate + 4-amino-2-methyl-5-(diphosphooxymethyl)pyrimidine + 2 H(+) = thiamine phosphate + CO2 + diphosphate</text>
        <dbReference type="Rhea" id="RHEA:47848"/>
        <dbReference type="ChEBI" id="CHEBI:15378"/>
        <dbReference type="ChEBI" id="CHEBI:16526"/>
        <dbReference type="ChEBI" id="CHEBI:33019"/>
        <dbReference type="ChEBI" id="CHEBI:37575"/>
        <dbReference type="ChEBI" id="CHEBI:57841"/>
        <dbReference type="ChEBI" id="CHEBI:62890"/>
        <dbReference type="EC" id="2.5.1.3"/>
    </reaction>
</comment>
<comment type="catalytic activity">
    <reaction evidence="1">
        <text>4-methyl-5-(2-phosphooxyethyl)-thiazole + 4-amino-2-methyl-5-(diphosphooxymethyl)pyrimidine + H(+) = thiamine phosphate + diphosphate</text>
        <dbReference type="Rhea" id="RHEA:22328"/>
        <dbReference type="ChEBI" id="CHEBI:15378"/>
        <dbReference type="ChEBI" id="CHEBI:33019"/>
        <dbReference type="ChEBI" id="CHEBI:37575"/>
        <dbReference type="ChEBI" id="CHEBI:57841"/>
        <dbReference type="ChEBI" id="CHEBI:58296"/>
        <dbReference type="EC" id="2.5.1.3"/>
    </reaction>
</comment>
<comment type="cofactor">
    <cofactor evidence="1">
        <name>Mg(2+)</name>
        <dbReference type="ChEBI" id="CHEBI:18420"/>
    </cofactor>
    <text evidence="1">Binds 1 Mg(2+) ion per subunit.</text>
</comment>
<comment type="pathway">
    <text evidence="1">Cofactor biosynthesis; thiamine diphosphate biosynthesis; thiamine phosphate from 4-amino-2-methyl-5-diphosphomethylpyrimidine and 4-methyl-5-(2-phosphoethyl)-thiazole: step 1/1.</text>
</comment>
<comment type="similarity">
    <text evidence="1">Belongs to the thiamine-phosphate synthase family.</text>
</comment>
<sequence length="214" mass="22444">MRAELAVYFIAGTQDIVRGTLPGVLEEALKAGITCFQYREKGVGSLQTASERKEMALECQQLCAKYQVPFIINDDVALALEIGADGIHVGQNDEGIRQVIASCAGKMKIGLSVHSVSEAAEAERLGAVDYIGVGPIFPTISKADAEPVSGTAILEEIRRAGIKLPIVGIGGINEKNSAEVLTAGADGVSVISAITRSDDCYSVIKQLKNPGSPS</sequence>
<keyword id="KW-0460">Magnesium</keyword>
<keyword id="KW-0479">Metal-binding</keyword>
<keyword id="KW-0784">Thiamine biosynthesis</keyword>
<keyword id="KW-0808">Transferase</keyword>
<evidence type="ECO:0000255" key="1">
    <source>
        <dbReference type="HAMAP-Rule" id="MF_00097"/>
    </source>
</evidence>
<feature type="chain" id="PRO_1000198081" description="Thiamine-phosphate synthase">
    <location>
        <begin position="1"/>
        <end position="214"/>
    </location>
</feature>
<feature type="binding site" evidence="1">
    <location>
        <begin position="37"/>
        <end position="41"/>
    </location>
    <ligand>
        <name>4-amino-2-methyl-5-(diphosphooxymethyl)pyrimidine</name>
        <dbReference type="ChEBI" id="CHEBI:57841"/>
    </ligand>
</feature>
<feature type="binding site" evidence="1">
    <location>
        <position position="73"/>
    </location>
    <ligand>
        <name>4-amino-2-methyl-5-(diphosphooxymethyl)pyrimidine</name>
        <dbReference type="ChEBI" id="CHEBI:57841"/>
    </ligand>
</feature>
<feature type="binding site" evidence="1">
    <location>
        <position position="74"/>
    </location>
    <ligand>
        <name>Mg(2+)</name>
        <dbReference type="ChEBI" id="CHEBI:18420"/>
    </ligand>
</feature>
<feature type="binding site" evidence="1">
    <location>
        <position position="93"/>
    </location>
    <ligand>
        <name>Mg(2+)</name>
        <dbReference type="ChEBI" id="CHEBI:18420"/>
    </ligand>
</feature>
<feature type="binding site" evidence="1">
    <location>
        <position position="112"/>
    </location>
    <ligand>
        <name>4-amino-2-methyl-5-(diphosphooxymethyl)pyrimidine</name>
        <dbReference type="ChEBI" id="CHEBI:57841"/>
    </ligand>
</feature>
<feature type="binding site" evidence="1">
    <location>
        <begin position="139"/>
        <end position="141"/>
    </location>
    <ligand>
        <name>2-[(2R,5Z)-2-carboxy-4-methylthiazol-5(2H)-ylidene]ethyl phosphate</name>
        <dbReference type="ChEBI" id="CHEBI:62899"/>
    </ligand>
</feature>
<feature type="binding site" evidence="1">
    <location>
        <position position="142"/>
    </location>
    <ligand>
        <name>4-amino-2-methyl-5-(diphosphooxymethyl)pyrimidine</name>
        <dbReference type="ChEBI" id="CHEBI:57841"/>
    </ligand>
</feature>
<feature type="binding site" evidence="1">
    <location>
        <position position="171"/>
    </location>
    <ligand>
        <name>2-[(2R,5Z)-2-carboxy-4-methylthiazol-5(2H)-ylidene]ethyl phosphate</name>
        <dbReference type="ChEBI" id="CHEBI:62899"/>
    </ligand>
</feature>
<feature type="binding site" evidence="1">
    <location>
        <begin position="191"/>
        <end position="192"/>
    </location>
    <ligand>
        <name>2-[(2R,5Z)-2-carboxy-4-methylthiazol-5(2H)-ylidene]ethyl phosphate</name>
        <dbReference type="ChEBI" id="CHEBI:62899"/>
    </ligand>
</feature>